<reference key="1">
    <citation type="journal article" date="2004" name="Nature">
        <title>DNA sequence and analysis of human chromosome 9.</title>
        <authorList>
            <person name="Humphray S.J."/>
            <person name="Oliver K."/>
            <person name="Hunt A.R."/>
            <person name="Plumb R.W."/>
            <person name="Loveland J.E."/>
            <person name="Howe K.L."/>
            <person name="Andrews T.D."/>
            <person name="Searle S."/>
            <person name="Hunt S.E."/>
            <person name="Scott C.E."/>
            <person name="Jones M.C."/>
            <person name="Ainscough R."/>
            <person name="Almeida J.P."/>
            <person name="Ambrose K.D."/>
            <person name="Ashwell R.I.S."/>
            <person name="Babbage A.K."/>
            <person name="Babbage S."/>
            <person name="Bagguley C.L."/>
            <person name="Bailey J."/>
            <person name="Banerjee R."/>
            <person name="Barker D.J."/>
            <person name="Barlow K.F."/>
            <person name="Bates K."/>
            <person name="Beasley H."/>
            <person name="Beasley O."/>
            <person name="Bird C.P."/>
            <person name="Bray-Allen S."/>
            <person name="Brown A.J."/>
            <person name="Brown J.Y."/>
            <person name="Burford D."/>
            <person name="Burrill W."/>
            <person name="Burton J."/>
            <person name="Carder C."/>
            <person name="Carter N.P."/>
            <person name="Chapman J.C."/>
            <person name="Chen Y."/>
            <person name="Clarke G."/>
            <person name="Clark S.Y."/>
            <person name="Clee C.M."/>
            <person name="Clegg S."/>
            <person name="Collier R.E."/>
            <person name="Corby N."/>
            <person name="Crosier M."/>
            <person name="Cummings A.T."/>
            <person name="Davies J."/>
            <person name="Dhami P."/>
            <person name="Dunn M."/>
            <person name="Dutta I."/>
            <person name="Dyer L.W."/>
            <person name="Earthrowl M.E."/>
            <person name="Faulkner L."/>
            <person name="Fleming C.J."/>
            <person name="Frankish A."/>
            <person name="Frankland J.A."/>
            <person name="French L."/>
            <person name="Fricker D.G."/>
            <person name="Garner P."/>
            <person name="Garnett J."/>
            <person name="Ghori J."/>
            <person name="Gilbert J.G.R."/>
            <person name="Glison C."/>
            <person name="Grafham D.V."/>
            <person name="Gribble S."/>
            <person name="Griffiths C."/>
            <person name="Griffiths-Jones S."/>
            <person name="Grocock R."/>
            <person name="Guy J."/>
            <person name="Hall R.E."/>
            <person name="Hammond S."/>
            <person name="Harley J.L."/>
            <person name="Harrison E.S.I."/>
            <person name="Hart E.A."/>
            <person name="Heath P.D."/>
            <person name="Henderson C.D."/>
            <person name="Hopkins B.L."/>
            <person name="Howard P.J."/>
            <person name="Howden P.J."/>
            <person name="Huckle E."/>
            <person name="Johnson C."/>
            <person name="Johnson D."/>
            <person name="Joy A.A."/>
            <person name="Kay M."/>
            <person name="Keenan S."/>
            <person name="Kershaw J.K."/>
            <person name="Kimberley A.M."/>
            <person name="King A."/>
            <person name="Knights A."/>
            <person name="Laird G.K."/>
            <person name="Langford C."/>
            <person name="Lawlor S."/>
            <person name="Leongamornlert D.A."/>
            <person name="Leversha M."/>
            <person name="Lloyd C."/>
            <person name="Lloyd D.M."/>
            <person name="Lovell J."/>
            <person name="Martin S."/>
            <person name="Mashreghi-Mohammadi M."/>
            <person name="Matthews L."/>
            <person name="McLaren S."/>
            <person name="McLay K.E."/>
            <person name="McMurray A."/>
            <person name="Milne S."/>
            <person name="Nickerson T."/>
            <person name="Nisbett J."/>
            <person name="Nordsiek G."/>
            <person name="Pearce A.V."/>
            <person name="Peck A.I."/>
            <person name="Porter K.M."/>
            <person name="Pandian R."/>
            <person name="Pelan S."/>
            <person name="Phillimore B."/>
            <person name="Povey S."/>
            <person name="Ramsey Y."/>
            <person name="Rand V."/>
            <person name="Scharfe M."/>
            <person name="Sehra H.K."/>
            <person name="Shownkeen R."/>
            <person name="Sims S.K."/>
            <person name="Skuce C.D."/>
            <person name="Smith M."/>
            <person name="Steward C.A."/>
            <person name="Swarbreck D."/>
            <person name="Sycamore N."/>
            <person name="Tester J."/>
            <person name="Thorpe A."/>
            <person name="Tracey A."/>
            <person name="Tromans A."/>
            <person name="Thomas D.W."/>
            <person name="Wall M."/>
            <person name="Wallis J.M."/>
            <person name="West A.P."/>
            <person name="Whitehead S.L."/>
            <person name="Willey D.L."/>
            <person name="Williams S.A."/>
            <person name="Wilming L."/>
            <person name="Wray P.W."/>
            <person name="Young L."/>
            <person name="Ashurst J.L."/>
            <person name="Coulson A."/>
            <person name="Blocker H."/>
            <person name="Durbin R.M."/>
            <person name="Sulston J.E."/>
            <person name="Hubbard T."/>
            <person name="Jackson M.J."/>
            <person name="Bentley D.R."/>
            <person name="Beck S."/>
            <person name="Rogers J."/>
            <person name="Dunham I."/>
        </authorList>
    </citation>
    <scope>NUCLEOTIDE SEQUENCE [LARGE SCALE GENOMIC DNA]</scope>
</reference>
<dbReference type="EMBL" id="AL591543">
    <property type="status" value="NOT_ANNOTATED_CDS"/>
    <property type="molecule type" value="Genomic_DNA"/>
</dbReference>
<dbReference type="CCDS" id="CCDS94410.1"/>
<dbReference type="RefSeq" id="NP_001373740.1">
    <property type="nucleotide sequence ID" value="NM_001386811.1"/>
</dbReference>
<dbReference type="RefSeq" id="NP_001381851.1">
    <property type="nucleotide sequence ID" value="NM_001394922.1"/>
</dbReference>
<dbReference type="SMR" id="A0A1B0GVZ2"/>
<dbReference type="STRING" id="9606.ENSP00000490097"/>
<dbReference type="BioMuta" id="FAM240B"/>
<dbReference type="PeptideAtlas" id="A0A1B0GVZ2"/>
<dbReference type="Ensembl" id="ENST00000637493.2">
    <property type="protein sequence ID" value="ENSP00000490097.1"/>
    <property type="gene ID" value="ENSG00000283329.2"/>
</dbReference>
<dbReference type="Ensembl" id="ENST00000637691.1">
    <property type="protein sequence ID" value="ENSP00000490707.1"/>
    <property type="gene ID" value="ENSG00000283329.2"/>
</dbReference>
<dbReference type="GeneID" id="110806297"/>
<dbReference type="MANE-Select" id="ENST00000637493.2">
    <property type="protein sequence ID" value="ENSP00000490097.1"/>
    <property type="RefSeq nucleotide sequence ID" value="NM_001394922.1"/>
    <property type="RefSeq protein sequence ID" value="NP_001381851.1"/>
</dbReference>
<dbReference type="AGR" id="HGNC:53430"/>
<dbReference type="GeneCards" id="FAM240B"/>
<dbReference type="HGNC" id="HGNC:53430">
    <property type="gene designation" value="FAM240B"/>
</dbReference>
<dbReference type="HPA" id="ENSG00000283329">
    <property type="expression patterns" value="Not detected"/>
</dbReference>
<dbReference type="neXtProt" id="NX_A0A1B0GVZ2"/>
<dbReference type="OpenTargets" id="ENSG00000283329"/>
<dbReference type="VEuPathDB" id="HostDB:ENSG00000283329"/>
<dbReference type="GeneTree" id="ENSGT00530000069333"/>
<dbReference type="InParanoid" id="A0A1B0GVZ2"/>
<dbReference type="OMA" id="MRREVFC"/>
<dbReference type="OrthoDB" id="9537570at2759"/>
<dbReference type="PAN-GO" id="A0A1B0GVZ2">
    <property type="GO annotations" value="0 GO annotations based on evolutionary models"/>
</dbReference>
<dbReference type="Pharos" id="A0A1B0GVZ2">
    <property type="development level" value="Tdark"/>
</dbReference>
<dbReference type="PRO" id="PR:A0A1B0GVZ2"/>
<dbReference type="Proteomes" id="UP000005640">
    <property type="component" value="Chromosome 9"/>
</dbReference>
<dbReference type="RNAct" id="A0A1B0GVZ2">
    <property type="molecule type" value="protein"/>
</dbReference>
<dbReference type="Bgee" id="ENSG00000283329">
    <property type="expression patterns" value="Expressed in male germ line stem cell (sensu Vertebrata) in testis and 14 other cell types or tissues"/>
</dbReference>
<dbReference type="InterPro" id="IPR040261">
    <property type="entry name" value="FAM240"/>
</dbReference>
<dbReference type="PANTHER" id="PTHR40387">
    <property type="entry name" value="PROTEIN FAM240B"/>
    <property type="match status" value="1"/>
</dbReference>
<dbReference type="PANTHER" id="PTHR40387:SF1">
    <property type="entry name" value="PROTEIN FAM240B"/>
    <property type="match status" value="1"/>
</dbReference>
<sequence length="78" mass="9744">MNNQYIRREVFCCGTCHELKSFWEKEISKQTFYRELEEDRQERSALKKLREEWRQRLERRLRMLDNPVEKEKPAHTAD</sequence>
<proteinExistence type="inferred from homology"/>
<evidence type="ECO:0000305" key="1"/>
<evidence type="ECO:0000312" key="2">
    <source>
        <dbReference type="HGNC" id="HGNC:53430"/>
    </source>
</evidence>
<organism>
    <name type="scientific">Homo sapiens</name>
    <name type="common">Human</name>
    <dbReference type="NCBI Taxonomy" id="9606"/>
    <lineage>
        <taxon>Eukaryota</taxon>
        <taxon>Metazoa</taxon>
        <taxon>Chordata</taxon>
        <taxon>Craniata</taxon>
        <taxon>Vertebrata</taxon>
        <taxon>Euteleostomi</taxon>
        <taxon>Mammalia</taxon>
        <taxon>Eutheria</taxon>
        <taxon>Euarchontoglires</taxon>
        <taxon>Primates</taxon>
        <taxon>Haplorrhini</taxon>
        <taxon>Catarrhini</taxon>
        <taxon>Hominidae</taxon>
        <taxon>Homo</taxon>
    </lineage>
</organism>
<feature type="chain" id="PRO_0000441720" description="Protein FAM240B">
    <location>
        <begin position="1"/>
        <end position="78"/>
    </location>
</feature>
<gene>
    <name evidence="2" type="primary">FAM240B</name>
</gene>
<comment type="similarity">
    <text evidence="1">Belongs to the FAM240 family.</text>
</comment>
<keyword id="KW-1185">Reference proteome</keyword>
<name>F240B_HUMAN</name>
<protein>
    <recommendedName>
        <fullName evidence="1">Protein FAM240B</fullName>
    </recommendedName>
</protein>
<accession>A0A1B0GVZ2</accession>